<organism>
    <name type="scientific">Pinus halepensis</name>
    <name type="common">Aleppo pine</name>
    <dbReference type="NCBI Taxonomy" id="71633"/>
    <lineage>
        <taxon>Eukaryota</taxon>
        <taxon>Viridiplantae</taxon>
        <taxon>Streptophyta</taxon>
        <taxon>Embryophyta</taxon>
        <taxon>Tracheophyta</taxon>
        <taxon>Spermatophyta</taxon>
        <taxon>Pinopsida</taxon>
        <taxon>Pinidae</taxon>
        <taxon>Conifers I</taxon>
        <taxon>Pinales</taxon>
        <taxon>Pinaceae</taxon>
        <taxon>Pinus</taxon>
        <taxon>Pinus subgen. Pinus</taxon>
    </lineage>
</organism>
<evidence type="ECO:0000269" key="1">
    <source>
    </source>
</evidence>
<evidence type="ECO:0000303" key="2">
    <source>
    </source>
</evidence>
<evidence type="ECO:0000305" key="3"/>
<name>AMP1_PINHA</name>
<protein>
    <recommendedName>
        <fullName>Antimicrobial peptide 1</fullName>
    </recommendedName>
</protein>
<accession>P85484</accession>
<reference evidence="3" key="1">
    <citation type="journal article" date="2009" name="J. Plant Physiol.">
        <title>Analysis of the soluble cell wall proteome of gymnosperms.</title>
        <authorList>
            <person name="Uzal E.N."/>
            <person name="Gomez-Ros L.V."/>
            <person name="Hernandez J.A."/>
            <person name="Pedreno M.A."/>
            <person name="Cuello J."/>
            <person name="Ros Barcelo A."/>
        </authorList>
    </citation>
    <scope>PROTEIN SEQUENCE</scope>
    <scope>SUBCELLULAR LOCATION</scope>
    <source>
        <strain evidence="1">PC-801</strain>
        <tissue evidence="1">Callus</tissue>
    </source>
</reference>
<proteinExistence type="evidence at protein level"/>
<sequence length="15" mass="1575">FSGSVNQACSGFGWK</sequence>
<feature type="chain" id="PRO_0000326463" description="Antimicrobial peptide 1">
    <location>
        <begin position="1" status="less than"/>
        <end position="15" status="greater than"/>
    </location>
</feature>
<feature type="non-terminal residue" evidence="2">
    <location>
        <position position="1"/>
    </location>
</feature>
<feature type="non-terminal residue" evidence="2">
    <location>
        <position position="15"/>
    </location>
</feature>
<dbReference type="GO" id="GO:0005576">
    <property type="term" value="C:extracellular region"/>
    <property type="evidence" value="ECO:0007669"/>
    <property type="project" value="UniProtKB-KW"/>
</dbReference>
<dbReference type="GO" id="GO:0006952">
    <property type="term" value="P:defense response"/>
    <property type="evidence" value="ECO:0007669"/>
    <property type="project" value="UniProtKB-KW"/>
</dbReference>
<keyword id="KW-0929">Antimicrobial</keyword>
<keyword id="KW-0134">Cell wall</keyword>
<keyword id="KW-0903">Direct protein sequencing</keyword>
<keyword id="KW-0611">Plant defense</keyword>
<keyword id="KW-0964">Secreted</keyword>
<comment type="subcellular location">
    <subcellularLocation>
        <location evidence="1">Secreted</location>
        <location evidence="1">Cell wall</location>
    </subcellularLocation>
</comment>